<dbReference type="EC" id="2.4.1.102" evidence="2"/>
<dbReference type="EC" id="2.4.1.148" evidence="2"/>
<dbReference type="EC" id="2.4.1.150" evidence="2"/>
<dbReference type="EMBL" id="AY143158">
    <property type="protein sequence ID" value="AAN18278.1"/>
    <property type="molecule type" value="Genomic_DNA"/>
</dbReference>
<dbReference type="SMR" id="Q80RC7"/>
<dbReference type="CAZy" id="GT14">
    <property type="family name" value="Glycosyltransferase Family 14"/>
</dbReference>
<dbReference type="GlyCosmos" id="Q80RC7">
    <property type="glycosylation" value="2 sites, No reported glycans"/>
</dbReference>
<dbReference type="UniPathway" id="UPA00378"/>
<dbReference type="GO" id="GO:0044178">
    <property type="term" value="C:host cell Golgi membrane"/>
    <property type="evidence" value="ECO:0007669"/>
    <property type="project" value="UniProtKB-SubCell"/>
</dbReference>
<dbReference type="GO" id="GO:0016020">
    <property type="term" value="C:membrane"/>
    <property type="evidence" value="ECO:0007669"/>
    <property type="project" value="UniProtKB-KW"/>
</dbReference>
<dbReference type="GO" id="GO:0047225">
    <property type="term" value="F:acetylgalactosaminyl-O-glycosyl-glycoprotein beta-1,6-N-acetylglucosaminyltransferase activity"/>
    <property type="evidence" value="ECO:0007669"/>
    <property type="project" value="UniProtKB-EC"/>
</dbReference>
<dbReference type="GO" id="GO:0003829">
    <property type="term" value="F:beta-1,3-galactosyl-O-glycosyl-glycoprotein beta-1,6-N-acetylglucosaminyltransferase activity"/>
    <property type="evidence" value="ECO:0007669"/>
    <property type="project" value="UniProtKB-EC"/>
</dbReference>
<dbReference type="GO" id="GO:0008109">
    <property type="term" value="F:N-acetyllactosaminide beta-1,6-N-acetylglucosaminyltransferase activity"/>
    <property type="evidence" value="ECO:0007669"/>
    <property type="project" value="UniProtKB-EC"/>
</dbReference>
<dbReference type="GO" id="GO:0006486">
    <property type="term" value="P:protein glycosylation"/>
    <property type="evidence" value="ECO:0007669"/>
    <property type="project" value="UniProtKB-UniPathway"/>
</dbReference>
<dbReference type="InterPro" id="IPR003406">
    <property type="entry name" value="Glyco_trans_14"/>
</dbReference>
<dbReference type="PANTHER" id="PTHR19297:SF81">
    <property type="entry name" value="BETA-1,3-GALACTOSYL-O-GLYCOSYL-GLYCOPROTEIN BETA-1,6-N-ACETYLGLUCOSAMINYLTRANSFERASE 3"/>
    <property type="match status" value="1"/>
</dbReference>
<dbReference type="PANTHER" id="PTHR19297">
    <property type="entry name" value="GLYCOSYLTRANSFERASE 14 FAMILY MEMBER"/>
    <property type="match status" value="1"/>
</dbReference>
<dbReference type="Pfam" id="PF02485">
    <property type="entry name" value="Branch"/>
    <property type="match status" value="1"/>
</dbReference>
<protein>
    <recommendedName>
        <fullName>Beta-1,3-galactosyl-O-glycosyl-glycoprotein beta-1,6-N-acetylglucosaminyltransferase</fullName>
        <ecNumber evidence="2">2.4.1.102</ecNumber>
        <ecNumber evidence="2">2.4.1.148</ecNumber>
        <ecNumber evidence="2">2.4.1.150</ecNumber>
    </recommendedName>
    <alternativeName>
        <fullName>C2GnT-mucin type</fullName>
        <shortName>C2GnT-M</shortName>
    </alternativeName>
</protein>
<comment type="function">
    <text>Non-essential glycosyltransferase that can synthesize all known mucin beta 6 N-acetylglucosaminides. Mediates core 2 and core 4 O-glycan branching, 2 important steps in mucin-type biosynthesis. Has also I-branching enzyme activity by converting linear into branched poly-N-acetyllactosaminoglycans. Contributes to the post-translational modifications of structural proteins.</text>
</comment>
<comment type="catalytic activity">
    <reaction evidence="2">
        <text>a 3-O-[beta-D-galactosyl-(1-&gt;3)-N-acetyl-alpha-D-galactosaminyl]-L-seryl-[protein] + UDP-N-acetyl-alpha-D-glucosamine = 3-O-{beta-D-galactosyl-(1-&gt;3)-[N-acetyl-beta-D-glucosaminyl-(1-&gt;6)]-N-acetyl-alpha-D-galactosaminyl}-L-seryl-[protein] + UDP + H(+)</text>
        <dbReference type="Rhea" id="RHEA:56212"/>
        <dbReference type="Rhea" id="RHEA-COMP:13922"/>
        <dbReference type="Rhea" id="RHEA-COMP:14419"/>
        <dbReference type="ChEBI" id="CHEBI:15378"/>
        <dbReference type="ChEBI" id="CHEBI:57705"/>
        <dbReference type="ChEBI" id="CHEBI:58223"/>
        <dbReference type="ChEBI" id="CHEBI:137949"/>
        <dbReference type="ChEBI" id="CHEBI:139605"/>
        <dbReference type="EC" id="2.4.1.102"/>
    </reaction>
</comment>
<comment type="catalytic activity">
    <reaction evidence="2">
        <text>a 3-O-[beta-D-galactosyl-(1-&gt;3)-N-acetyl-alpha-D-galactosaminyl]-L-threonyl-[protein] + UDP-N-acetyl-alpha-D-glucosamine = a 3-O-{beta-D-galactosyl-(1-&gt;3)-[N-acetyl-beta-D-glucosaminyl-(1-&gt;6)]-N-acetyl-alpha-D-galactosaminyl}-L-threonyl-[protein] + UDP + H(+)</text>
        <dbReference type="Rhea" id="RHEA:56216"/>
        <dbReference type="Rhea" id="RHEA-COMP:13923"/>
        <dbReference type="Rhea" id="RHEA-COMP:14420"/>
        <dbReference type="ChEBI" id="CHEBI:15378"/>
        <dbReference type="ChEBI" id="CHEBI:57705"/>
        <dbReference type="ChEBI" id="CHEBI:58223"/>
        <dbReference type="ChEBI" id="CHEBI:137950"/>
        <dbReference type="ChEBI" id="CHEBI:139607"/>
        <dbReference type="EC" id="2.4.1.102"/>
    </reaction>
</comment>
<comment type="catalytic activity">
    <reaction evidence="2">
        <text>a beta-D-Gal-(1-&gt;4)-beta-D-GlcNAc-(1-&gt;3)-beta-D-Gal-(1-&gt;4)-beta-D-GlcNAc derivative + UDP-N-acetyl-alpha-D-glucosamine = a beta-D-Gal-(1-&gt;4)-beta-D-GlcNAc-(1-&gt;3)-[beta-D-GlcNAc-(1-&gt;6)]-beta-D-Gal-(1-&gt;4)-N-acetyl-beta-D-glucosaminyl derivative + UDP + H(+)</text>
        <dbReference type="Rhea" id="RHEA:54820"/>
        <dbReference type="ChEBI" id="CHEBI:15378"/>
        <dbReference type="ChEBI" id="CHEBI:57705"/>
        <dbReference type="ChEBI" id="CHEBI:58223"/>
        <dbReference type="ChEBI" id="CHEBI:138371"/>
        <dbReference type="ChEBI" id="CHEBI:138372"/>
        <dbReference type="EC" id="2.4.1.150"/>
    </reaction>
</comment>
<comment type="catalytic activity">
    <reaction evidence="2">
        <text>3-O-[N-acetyl-beta-D-glucosaminyl-(1-&gt;3)-N-acetyl-alpha-D-galactosaminyl]-L-seryl-[protein] + UDP-N-acetyl-alpha-D-glucosamine = 3-O-[N-acetyl-beta-D-glucosaminyl-(1-&gt;3)-[N-acetyl-beta-D-glucosaminyl-(1-&gt;6)]-N-acetyl-alpha-D-galactosaminyl]-L-seryl-[protein] + UDP + H(+)</text>
        <dbReference type="Rhea" id="RHEA:56188"/>
        <dbReference type="Rhea" id="RHEA-COMP:11691"/>
        <dbReference type="Rhea" id="RHEA-COMP:14412"/>
        <dbReference type="ChEBI" id="CHEBI:15378"/>
        <dbReference type="ChEBI" id="CHEBI:57705"/>
        <dbReference type="ChEBI" id="CHEBI:58223"/>
        <dbReference type="ChEBI" id="CHEBI:87079"/>
        <dbReference type="ChEBI" id="CHEBI:139581"/>
        <dbReference type="EC" id="2.4.1.148"/>
    </reaction>
</comment>
<comment type="catalytic activity">
    <reaction evidence="2">
        <text>a 3-O-[N-acetyl-beta-D-glucosaminyl-(1-&gt;3)-N-acetyl-alpha-D-galactosaminyl]-L-threonyl-[protein] + UDP-N-acetyl-alpha-D-glucosamine = 3-O-[N-acetyl-beta-D-glucosaminyl-(1-&gt;3)-[N-acetyl-beta-D-glucosaminyl-(1-&gt;6)]-N-acetyl-alpha-D-galactosaminyl]-L-threonyl-[protein] + UDP + H(+)</text>
        <dbReference type="Rhea" id="RHEA:56192"/>
        <dbReference type="Rhea" id="RHEA-COMP:11692"/>
        <dbReference type="Rhea" id="RHEA-COMP:14413"/>
        <dbReference type="ChEBI" id="CHEBI:15378"/>
        <dbReference type="ChEBI" id="CHEBI:57705"/>
        <dbReference type="ChEBI" id="CHEBI:58223"/>
        <dbReference type="ChEBI" id="CHEBI:87080"/>
        <dbReference type="ChEBI" id="CHEBI:139580"/>
        <dbReference type="EC" id="2.4.1.148"/>
    </reaction>
</comment>
<comment type="pathway">
    <text>Protein modification; protein glycosylation.</text>
</comment>
<comment type="subcellular location">
    <subcellularLocation>
        <location evidence="1">Host Golgi apparatus membrane</location>
        <topology evidence="1">Single-pass type II membrane protein</topology>
    </subcellularLocation>
</comment>
<comment type="developmental stage">
    <text>Expressed during BHV-4 replication (at protein level).</text>
</comment>
<comment type="miscellaneous">
    <text>Was acquired from an ancestor of the African buffalo around 1.5 million years ago.</text>
</comment>
<comment type="similarity">
    <text evidence="4">Belongs to the glycosyltransferase 14 family.</text>
</comment>
<name>GCNT3_BHV4</name>
<evidence type="ECO:0000250" key="1"/>
<evidence type="ECO:0000250" key="2">
    <source>
        <dbReference type="UniProtKB" id="Q9IZK2"/>
    </source>
</evidence>
<evidence type="ECO:0000255" key="3"/>
<evidence type="ECO:0000305" key="4"/>
<keyword id="KW-1015">Disulfide bond</keyword>
<keyword id="KW-0325">Glycoprotein</keyword>
<keyword id="KW-0328">Glycosyltransferase</keyword>
<keyword id="KW-1040">Host Golgi apparatus</keyword>
<keyword id="KW-1043">Host membrane</keyword>
<keyword id="KW-0472">Membrane</keyword>
<keyword id="KW-0735">Signal-anchor</keyword>
<keyword id="KW-0808">Transferase</keyword>
<keyword id="KW-0812">Transmembrane</keyword>
<keyword id="KW-1133">Transmembrane helix</keyword>
<feature type="chain" id="PRO_0000288551" description="Beta-1,3-galactosyl-O-glycosyl-glycoprotein beta-1,6-N-acetylglucosaminyltransferase">
    <location>
        <begin position="1"/>
        <end position="439"/>
    </location>
</feature>
<feature type="topological domain" description="Cytoplasmic" evidence="3">
    <location>
        <begin position="1"/>
        <end position="11"/>
    </location>
</feature>
<feature type="transmembrane region" description="Helical; Signal-anchor for type II membrane protein" evidence="3">
    <location>
        <begin position="12"/>
        <end position="29"/>
    </location>
</feature>
<feature type="topological domain" description="Lumenal" evidence="3">
    <location>
        <begin position="30"/>
        <end position="439"/>
    </location>
</feature>
<feature type="glycosylation site" description="N-linked (GlcNAc...) asparagine; by host" evidence="3">
    <location>
        <position position="71"/>
    </location>
</feature>
<feature type="glycosylation site" description="N-linked (GlcNAc...) asparagine; by host" evidence="3">
    <location>
        <position position="107"/>
    </location>
</feature>
<feature type="disulfide bond" evidence="1">
    <location>
        <begin position="72"/>
        <end position="229"/>
    </location>
</feature>
<feature type="disulfide bond" evidence="1">
    <location>
        <begin position="163"/>
        <end position="383"/>
    </location>
</feature>
<feature type="disulfide bond" evidence="1">
    <location>
        <begin position="184"/>
        <end position="211"/>
    </location>
</feature>
<feature type="disulfide bond" evidence="1">
    <location>
        <begin position="392"/>
        <end position="424"/>
    </location>
</feature>
<gene>
    <name type="primary">Bo17</name>
</gene>
<proteinExistence type="evidence at protein level"/>
<accession>Q80RC7</accession>
<organism>
    <name type="scientific">Bovine herpesvirus 4</name>
    <name type="common">BoHV-4</name>
    <name type="synonym">Movar virus</name>
    <dbReference type="NCBI Taxonomy" id="10385"/>
    <lineage>
        <taxon>Viruses</taxon>
        <taxon>Duplodnaviria</taxon>
        <taxon>Heunggongvirae</taxon>
        <taxon>Peploviricota</taxon>
        <taxon>Herviviricetes</taxon>
        <taxon>Herpesvirales</taxon>
        <taxon>Orthoherpesviridae</taxon>
        <taxon>Gammaherpesvirinae</taxon>
        <taxon>Rhadinovirus</taxon>
        <taxon>Rhadinovirus bovinegamma4</taxon>
    </lineage>
</organism>
<reference key="1">
    <citation type="journal article" date="2003" name="J. Virol.">
        <title>The core 2 beta-1,6-N-acetylglucosaminyltransferase-mucin encoded by bovine herpesvirus 4 was acquired from an ancestor of the African buffalo.</title>
        <authorList>
            <person name="Markine-Goriaynoff N."/>
            <person name="Georgin J.-P."/>
            <person name="Goltz M."/>
            <person name="Zimmermann W."/>
            <person name="Broll H."/>
            <person name="Wamwayi H.M."/>
            <person name="Pastoret P.-P."/>
            <person name="Sharp P.M."/>
            <person name="Vanderplasschen A."/>
        </authorList>
    </citation>
    <scope>NUCLEOTIDE SEQUENCE [GENOMIC DNA]</scope>
    <source>
        <strain>M40</strain>
    </source>
</reference>
<organismHost>
    <name type="scientific">Bos taurus</name>
    <name type="common">Bovine</name>
    <dbReference type="NCBI Taxonomy" id="9913"/>
</organismHost>
<organismHost>
    <name type="scientific">Felis catus</name>
    <name type="common">Cat</name>
    <name type="synonym">Felis silvestris catus</name>
    <dbReference type="NCBI Taxonomy" id="9685"/>
</organismHost>
<organismHost>
    <name type="scientific">Panthera leo</name>
    <name type="common">Lion</name>
    <dbReference type="NCBI Taxonomy" id="9689"/>
</organismHost>
<sequence>MVGWKKKKLCRGHHLWVLGCYMLLAVVSLRLSLRFKCDVDSLDLESRDFQSQHCRDMLYNNLKLPAKRSINCSGITRGDQEAVVQALLDNLEVKKKRPPLTDTYYLNITRDCERFKAQRKFIQFPLSKEELDFPIAYSMVVHEKIENFERLLRAVYAPQNIYCVHVDVKSPETFKEAVKAIISCFPNVFMASKLVPVVYASWSRVQADLNCMEDLLQSSVSWKYLLNTCGTDFPIKTNAEMVLALKMLKGKNSMESEVPSESKKNRWKYHYEVTDTLYPTSKMKDPPPDNLPMFTGNAYFVASRAFVQHVLDNPKSQRLVEWVKDTYSPDEHLWATLQRAPWMPGSVPSHPKYHISDMTAVARLVKWQYHEGDVSMGAPYAPCSGIHRRAICIYGAGDLYWILQNHHLLANKFDPRVDDNVLQCLEEYLRHKAIYGTEL</sequence>